<comment type="function">
    <text evidence="1">NDH-1 shuttles electrons from NADH, via FMN and iron-sulfur (Fe-S) centers, to quinones in the respiratory chain. The immediate electron acceptor for the enzyme in this species is believed to be ubiquinone. Couples the redox reaction to proton translocation (for every two electrons transferred, four hydrogen ions are translocated across the cytoplasmic membrane), and thus conserves the redox energy in a proton gradient. This subunit may bind ubiquinone.</text>
</comment>
<comment type="catalytic activity">
    <reaction evidence="1">
        <text>a quinone + NADH + 5 H(+)(in) = a quinol + NAD(+) + 4 H(+)(out)</text>
        <dbReference type="Rhea" id="RHEA:57888"/>
        <dbReference type="ChEBI" id="CHEBI:15378"/>
        <dbReference type="ChEBI" id="CHEBI:24646"/>
        <dbReference type="ChEBI" id="CHEBI:57540"/>
        <dbReference type="ChEBI" id="CHEBI:57945"/>
        <dbReference type="ChEBI" id="CHEBI:132124"/>
    </reaction>
</comment>
<comment type="subunit">
    <text evidence="1">NDH-1 is composed of 14 different subunits. Subunits NuoA, H, J, K, L, M, N constitute the membrane sector of the complex.</text>
</comment>
<comment type="subcellular location">
    <subcellularLocation>
        <location evidence="1">Cell inner membrane</location>
        <topology evidence="1">Multi-pass membrane protein</topology>
    </subcellularLocation>
</comment>
<comment type="similarity">
    <text evidence="1">Belongs to the complex I subunit 1 family.</text>
</comment>
<protein>
    <recommendedName>
        <fullName evidence="1">NADH-quinone oxidoreductase subunit H</fullName>
        <ecNumber evidence="1">7.1.1.-</ecNumber>
    </recommendedName>
    <alternativeName>
        <fullName evidence="1">NADH dehydrogenase I subunit H</fullName>
    </alternativeName>
    <alternativeName>
        <fullName evidence="1">NDH-1 subunit H</fullName>
    </alternativeName>
</protein>
<keyword id="KW-0997">Cell inner membrane</keyword>
<keyword id="KW-1003">Cell membrane</keyword>
<keyword id="KW-0472">Membrane</keyword>
<keyword id="KW-0520">NAD</keyword>
<keyword id="KW-0874">Quinone</keyword>
<keyword id="KW-1185">Reference proteome</keyword>
<keyword id="KW-1278">Translocase</keyword>
<keyword id="KW-0812">Transmembrane</keyword>
<keyword id="KW-1133">Transmembrane helix</keyword>
<keyword id="KW-0830">Ubiquinone</keyword>
<proteinExistence type="inferred from homology"/>
<evidence type="ECO:0000255" key="1">
    <source>
        <dbReference type="HAMAP-Rule" id="MF_01350"/>
    </source>
</evidence>
<accession>Q5ZRU5</accession>
<organism>
    <name type="scientific">Legionella pneumophila subsp. pneumophila (strain Philadelphia 1 / ATCC 33152 / DSM 7513)</name>
    <dbReference type="NCBI Taxonomy" id="272624"/>
    <lineage>
        <taxon>Bacteria</taxon>
        <taxon>Pseudomonadati</taxon>
        <taxon>Pseudomonadota</taxon>
        <taxon>Gammaproteobacteria</taxon>
        <taxon>Legionellales</taxon>
        <taxon>Legionellaceae</taxon>
        <taxon>Legionella</taxon>
    </lineage>
</organism>
<sequence length="340" mass="37996">MLHTIGILIWIIIKILVIVVPLLISVAYLTYAERKVIGYIQVRIGPNRVGLKGLLQPFADLLKLITKEIIVPTRSNKYLFVIAPLFALVPSLVGWAVIPFQEGIVLANINAGVLYLFAMSSLGVYGVLIAGWASNSKYAMFGALRSTAQTVSYEIAMGFALVGVLLAAGSMNLTDIVNSQKGGMLHWWFIPLLPLFLVFWISGIAETNRAPFDLAEGESEIVAGFHVEYSGIGFALFFLSEYASMILISTVLAILFMGGWLSPFEGITFLDQIFFIVPGFVWLLLKISFFLFVYLWVRATFPRYRYDQLMRLGWKVLIPVTIVWLIVTALMVVAHVKPWF</sequence>
<dbReference type="EC" id="7.1.1.-" evidence="1"/>
<dbReference type="EMBL" id="AE017354">
    <property type="protein sequence ID" value="AAU28832.1"/>
    <property type="molecule type" value="Genomic_DNA"/>
</dbReference>
<dbReference type="RefSeq" id="WP_010948471.1">
    <property type="nucleotide sequence ID" value="NC_002942.5"/>
</dbReference>
<dbReference type="RefSeq" id="YP_096779.1">
    <property type="nucleotide sequence ID" value="NC_002942.5"/>
</dbReference>
<dbReference type="SMR" id="Q5ZRU5"/>
<dbReference type="STRING" id="272624.lpg2782"/>
<dbReference type="PaxDb" id="272624-lpg2782"/>
<dbReference type="DNASU" id="3079953"/>
<dbReference type="GeneID" id="57036780"/>
<dbReference type="KEGG" id="lpn:lpg2782"/>
<dbReference type="PATRIC" id="fig|272624.6.peg.2963"/>
<dbReference type="eggNOG" id="COG1005">
    <property type="taxonomic scope" value="Bacteria"/>
</dbReference>
<dbReference type="HOGENOM" id="CLU_015134_0_1_6"/>
<dbReference type="OrthoDB" id="9803734at2"/>
<dbReference type="Proteomes" id="UP000000609">
    <property type="component" value="Chromosome"/>
</dbReference>
<dbReference type="GO" id="GO:0005886">
    <property type="term" value="C:plasma membrane"/>
    <property type="evidence" value="ECO:0007669"/>
    <property type="project" value="UniProtKB-SubCell"/>
</dbReference>
<dbReference type="GO" id="GO:0003954">
    <property type="term" value="F:NADH dehydrogenase activity"/>
    <property type="evidence" value="ECO:0007669"/>
    <property type="project" value="TreeGrafter"/>
</dbReference>
<dbReference type="GO" id="GO:0016655">
    <property type="term" value="F:oxidoreductase activity, acting on NAD(P)H, quinone or similar compound as acceptor"/>
    <property type="evidence" value="ECO:0007669"/>
    <property type="project" value="UniProtKB-UniRule"/>
</dbReference>
<dbReference type="GO" id="GO:0048038">
    <property type="term" value="F:quinone binding"/>
    <property type="evidence" value="ECO:0007669"/>
    <property type="project" value="UniProtKB-KW"/>
</dbReference>
<dbReference type="GO" id="GO:0009060">
    <property type="term" value="P:aerobic respiration"/>
    <property type="evidence" value="ECO:0007669"/>
    <property type="project" value="TreeGrafter"/>
</dbReference>
<dbReference type="HAMAP" id="MF_01350">
    <property type="entry name" value="NDH1_NuoH"/>
    <property type="match status" value="1"/>
</dbReference>
<dbReference type="InterPro" id="IPR001694">
    <property type="entry name" value="NADH_UbQ_OxRdtase_su1/FPO"/>
</dbReference>
<dbReference type="InterPro" id="IPR018086">
    <property type="entry name" value="NADH_UbQ_OxRdtase_su1_CS"/>
</dbReference>
<dbReference type="NCBIfam" id="NF004741">
    <property type="entry name" value="PRK06076.1-2"/>
    <property type="match status" value="1"/>
</dbReference>
<dbReference type="PANTHER" id="PTHR11432">
    <property type="entry name" value="NADH DEHYDROGENASE SUBUNIT 1"/>
    <property type="match status" value="1"/>
</dbReference>
<dbReference type="PANTHER" id="PTHR11432:SF3">
    <property type="entry name" value="NADH-UBIQUINONE OXIDOREDUCTASE CHAIN 1"/>
    <property type="match status" value="1"/>
</dbReference>
<dbReference type="Pfam" id="PF00146">
    <property type="entry name" value="NADHdh"/>
    <property type="match status" value="1"/>
</dbReference>
<dbReference type="PROSITE" id="PS00668">
    <property type="entry name" value="COMPLEX1_ND1_2"/>
    <property type="match status" value="1"/>
</dbReference>
<reference key="1">
    <citation type="journal article" date="2004" name="Science">
        <title>The genomic sequence of the accidental pathogen Legionella pneumophila.</title>
        <authorList>
            <person name="Chien M."/>
            <person name="Morozova I."/>
            <person name="Shi S."/>
            <person name="Sheng H."/>
            <person name="Chen J."/>
            <person name="Gomez S.M."/>
            <person name="Asamani G."/>
            <person name="Hill K."/>
            <person name="Nuara J."/>
            <person name="Feder M."/>
            <person name="Rineer J."/>
            <person name="Greenberg J.J."/>
            <person name="Steshenko V."/>
            <person name="Park S.H."/>
            <person name="Zhao B."/>
            <person name="Teplitskaya E."/>
            <person name="Edwards J.R."/>
            <person name="Pampou S."/>
            <person name="Georghiou A."/>
            <person name="Chou I.-C."/>
            <person name="Iannuccilli W."/>
            <person name="Ulz M.E."/>
            <person name="Kim D.H."/>
            <person name="Geringer-Sameth A."/>
            <person name="Goldsberry C."/>
            <person name="Morozov P."/>
            <person name="Fischer S.G."/>
            <person name="Segal G."/>
            <person name="Qu X."/>
            <person name="Rzhetsky A."/>
            <person name="Zhang P."/>
            <person name="Cayanis E."/>
            <person name="De Jong P.J."/>
            <person name="Ju J."/>
            <person name="Kalachikov S."/>
            <person name="Shuman H.A."/>
            <person name="Russo J.J."/>
        </authorList>
    </citation>
    <scope>NUCLEOTIDE SEQUENCE [LARGE SCALE GENOMIC DNA]</scope>
    <source>
        <strain>Philadelphia 1 / ATCC 33152 / DSM 7513</strain>
    </source>
</reference>
<gene>
    <name evidence="1" type="primary">nuoH</name>
    <name type="ordered locus">lpg2782</name>
</gene>
<feature type="chain" id="PRO_0000240083" description="NADH-quinone oxidoreductase subunit H">
    <location>
        <begin position="1"/>
        <end position="340"/>
    </location>
</feature>
<feature type="transmembrane region" description="Helical" evidence="1">
    <location>
        <begin position="4"/>
        <end position="24"/>
    </location>
</feature>
<feature type="transmembrane region" description="Helical" evidence="1">
    <location>
        <begin position="78"/>
        <end position="98"/>
    </location>
</feature>
<feature type="transmembrane region" description="Helical" evidence="1">
    <location>
        <begin position="113"/>
        <end position="133"/>
    </location>
</feature>
<feature type="transmembrane region" description="Helical" evidence="1">
    <location>
        <begin position="151"/>
        <end position="171"/>
    </location>
</feature>
<feature type="transmembrane region" description="Helical" evidence="1">
    <location>
        <begin position="184"/>
        <end position="204"/>
    </location>
</feature>
<feature type="transmembrane region" description="Helical" evidence="1">
    <location>
        <begin position="244"/>
        <end position="264"/>
    </location>
</feature>
<feature type="transmembrane region" description="Helical" evidence="1">
    <location>
        <begin position="273"/>
        <end position="293"/>
    </location>
</feature>
<feature type="transmembrane region" description="Helical" evidence="1">
    <location>
        <begin position="316"/>
        <end position="336"/>
    </location>
</feature>
<name>NUOH_LEGPH</name>